<proteinExistence type="inferred from homology"/>
<organism>
    <name type="scientific">Legionella pneumophila (strain Corby)</name>
    <dbReference type="NCBI Taxonomy" id="400673"/>
    <lineage>
        <taxon>Bacteria</taxon>
        <taxon>Pseudomonadati</taxon>
        <taxon>Pseudomonadota</taxon>
        <taxon>Gammaproteobacteria</taxon>
        <taxon>Legionellales</taxon>
        <taxon>Legionellaceae</taxon>
        <taxon>Legionella</taxon>
    </lineage>
</organism>
<evidence type="ECO:0000255" key="1">
    <source>
        <dbReference type="HAMAP-Rule" id="MF_00362"/>
    </source>
</evidence>
<evidence type="ECO:0000305" key="2"/>
<reference key="1">
    <citation type="submission" date="2006-11" db="EMBL/GenBank/DDBJ databases">
        <title>Identification and characterization of a new conjugation/ type IVA secretion system (trb/tra) of L. pneumophila Corby localized on a mobile genomic island.</title>
        <authorList>
            <person name="Gloeckner G."/>
            <person name="Albert-Weissenberger C."/>
            <person name="Weinmann E."/>
            <person name="Jacobi S."/>
            <person name="Schunder E."/>
            <person name="Steinert M."/>
            <person name="Buchrieser C."/>
            <person name="Hacker J."/>
            <person name="Heuner K."/>
        </authorList>
    </citation>
    <scope>NUCLEOTIDE SEQUENCE [LARGE SCALE GENOMIC DNA]</scope>
    <source>
        <strain>Corby</strain>
    </source>
</reference>
<keyword id="KW-0687">Ribonucleoprotein</keyword>
<keyword id="KW-0689">Ribosomal protein</keyword>
<keyword id="KW-0694">RNA-binding</keyword>
<keyword id="KW-0699">rRNA-binding</keyword>
<accession>A5IHS3</accession>
<sequence>MTLNLAAKKAVVEEVTAVASKAISAVVADYRGLTVNQMTQLRSEARKSGVYLRVVRNTLTRRALKNTEFECLNDLLVGPVFIALSLEAPSDAARLLKDYAKTFEKLEIRALSVGGKVYNANQIDAVASLPTRDEAISKLMYVMKAPIEKFVRTLAEPHAKLARTLAAVKDKKAGNPA</sequence>
<gene>
    <name evidence="1" type="primary">rplJ</name>
    <name type="ordered locus">LPC_3023</name>
</gene>
<comment type="function">
    <text evidence="1">Forms part of the ribosomal stalk, playing a central role in the interaction of the ribosome with GTP-bound translation factors.</text>
</comment>
<comment type="subunit">
    <text evidence="1">Part of the ribosomal stalk of the 50S ribosomal subunit. The N-terminus interacts with L11 and the large rRNA to form the base of the stalk. The C-terminus forms an elongated spine to which L12 dimers bind in a sequential fashion forming a multimeric L10(L12)X complex.</text>
</comment>
<comment type="similarity">
    <text evidence="1">Belongs to the universal ribosomal protein uL10 family.</text>
</comment>
<name>RL10_LEGPC</name>
<protein>
    <recommendedName>
        <fullName evidence="1">Large ribosomal subunit protein uL10</fullName>
    </recommendedName>
    <alternativeName>
        <fullName evidence="2">50S ribosomal protein L10</fullName>
    </alternativeName>
</protein>
<feature type="chain" id="PRO_1000005524" description="Large ribosomal subunit protein uL10">
    <location>
        <begin position="1"/>
        <end position="177"/>
    </location>
</feature>
<dbReference type="EMBL" id="CP000675">
    <property type="protein sequence ID" value="ABQ56923.1"/>
    <property type="molecule type" value="Genomic_DNA"/>
</dbReference>
<dbReference type="RefSeq" id="WP_011945542.1">
    <property type="nucleotide sequence ID" value="NC_009494.2"/>
</dbReference>
<dbReference type="SMR" id="A5IHS3"/>
<dbReference type="KEGG" id="lpc:LPC_3023"/>
<dbReference type="HOGENOM" id="CLU_092227_0_1_6"/>
<dbReference type="GO" id="GO:0015934">
    <property type="term" value="C:large ribosomal subunit"/>
    <property type="evidence" value="ECO:0007669"/>
    <property type="project" value="InterPro"/>
</dbReference>
<dbReference type="GO" id="GO:0070180">
    <property type="term" value="F:large ribosomal subunit rRNA binding"/>
    <property type="evidence" value="ECO:0007669"/>
    <property type="project" value="UniProtKB-UniRule"/>
</dbReference>
<dbReference type="GO" id="GO:0003735">
    <property type="term" value="F:structural constituent of ribosome"/>
    <property type="evidence" value="ECO:0007669"/>
    <property type="project" value="InterPro"/>
</dbReference>
<dbReference type="GO" id="GO:0006412">
    <property type="term" value="P:translation"/>
    <property type="evidence" value="ECO:0007669"/>
    <property type="project" value="UniProtKB-UniRule"/>
</dbReference>
<dbReference type="CDD" id="cd05797">
    <property type="entry name" value="Ribosomal_L10"/>
    <property type="match status" value="1"/>
</dbReference>
<dbReference type="Gene3D" id="3.30.70.1730">
    <property type="match status" value="1"/>
</dbReference>
<dbReference type="Gene3D" id="6.10.250.290">
    <property type="match status" value="1"/>
</dbReference>
<dbReference type="HAMAP" id="MF_00362">
    <property type="entry name" value="Ribosomal_uL10"/>
    <property type="match status" value="1"/>
</dbReference>
<dbReference type="InterPro" id="IPR001790">
    <property type="entry name" value="Ribosomal_uL10"/>
</dbReference>
<dbReference type="InterPro" id="IPR043141">
    <property type="entry name" value="Ribosomal_uL10-like_sf"/>
</dbReference>
<dbReference type="InterPro" id="IPR022973">
    <property type="entry name" value="Ribosomal_uL10_bac"/>
</dbReference>
<dbReference type="InterPro" id="IPR047865">
    <property type="entry name" value="Ribosomal_uL10_bac_type"/>
</dbReference>
<dbReference type="InterPro" id="IPR002363">
    <property type="entry name" value="Ribosomal_uL10_CS_bac"/>
</dbReference>
<dbReference type="NCBIfam" id="NF000955">
    <property type="entry name" value="PRK00099.1-1"/>
    <property type="match status" value="1"/>
</dbReference>
<dbReference type="PANTHER" id="PTHR11560">
    <property type="entry name" value="39S RIBOSOMAL PROTEIN L10, MITOCHONDRIAL"/>
    <property type="match status" value="1"/>
</dbReference>
<dbReference type="Pfam" id="PF00466">
    <property type="entry name" value="Ribosomal_L10"/>
    <property type="match status" value="1"/>
</dbReference>
<dbReference type="SUPFAM" id="SSF160369">
    <property type="entry name" value="Ribosomal protein L10-like"/>
    <property type="match status" value="1"/>
</dbReference>
<dbReference type="PROSITE" id="PS01109">
    <property type="entry name" value="RIBOSOMAL_L10"/>
    <property type="match status" value="1"/>
</dbReference>